<proteinExistence type="inferred from homology"/>
<feature type="chain" id="PRO_1000053100" description="Large ribosomal subunit protein uL18">
    <location>
        <begin position="1"/>
        <end position="118"/>
    </location>
</feature>
<sequence length="118" mass="13260">MRSAKLKFEKRRSRIRHKISQTSNRVRLSIFKSCRHIYAQIIDDSKSITIASASTLDAKIKKLKKSHCNIENAIKVGKAIATKADSAGIKEVVFDRGGYKYHGVVKALADAAREKIKF</sequence>
<organism>
    <name type="scientific">Rickettsia canadensis (strain McKiel)</name>
    <dbReference type="NCBI Taxonomy" id="293613"/>
    <lineage>
        <taxon>Bacteria</taxon>
        <taxon>Pseudomonadati</taxon>
        <taxon>Pseudomonadota</taxon>
        <taxon>Alphaproteobacteria</taxon>
        <taxon>Rickettsiales</taxon>
        <taxon>Rickettsiaceae</taxon>
        <taxon>Rickettsieae</taxon>
        <taxon>Rickettsia</taxon>
        <taxon>belli group</taxon>
    </lineage>
</organism>
<dbReference type="EMBL" id="CP000409">
    <property type="protein sequence ID" value="ABV73783.1"/>
    <property type="molecule type" value="Genomic_DNA"/>
</dbReference>
<dbReference type="RefSeq" id="WP_012148978.1">
    <property type="nucleotide sequence ID" value="NC_009879.1"/>
</dbReference>
<dbReference type="SMR" id="A8EZK0"/>
<dbReference type="STRING" id="293613.A1E_04290"/>
<dbReference type="KEGG" id="rcm:A1E_04290"/>
<dbReference type="eggNOG" id="COG0256">
    <property type="taxonomic scope" value="Bacteria"/>
</dbReference>
<dbReference type="HOGENOM" id="CLU_098841_0_1_5"/>
<dbReference type="Proteomes" id="UP000007056">
    <property type="component" value="Chromosome"/>
</dbReference>
<dbReference type="GO" id="GO:0022625">
    <property type="term" value="C:cytosolic large ribosomal subunit"/>
    <property type="evidence" value="ECO:0007669"/>
    <property type="project" value="TreeGrafter"/>
</dbReference>
<dbReference type="GO" id="GO:0008097">
    <property type="term" value="F:5S rRNA binding"/>
    <property type="evidence" value="ECO:0007669"/>
    <property type="project" value="TreeGrafter"/>
</dbReference>
<dbReference type="GO" id="GO:0003735">
    <property type="term" value="F:structural constituent of ribosome"/>
    <property type="evidence" value="ECO:0007669"/>
    <property type="project" value="InterPro"/>
</dbReference>
<dbReference type="GO" id="GO:0006412">
    <property type="term" value="P:translation"/>
    <property type="evidence" value="ECO:0007669"/>
    <property type="project" value="UniProtKB-UniRule"/>
</dbReference>
<dbReference type="CDD" id="cd00432">
    <property type="entry name" value="Ribosomal_L18_L5e"/>
    <property type="match status" value="1"/>
</dbReference>
<dbReference type="FunFam" id="3.30.420.100:FF:000001">
    <property type="entry name" value="50S ribosomal protein L18"/>
    <property type="match status" value="1"/>
</dbReference>
<dbReference type="Gene3D" id="3.30.420.100">
    <property type="match status" value="1"/>
</dbReference>
<dbReference type="HAMAP" id="MF_01337_B">
    <property type="entry name" value="Ribosomal_uL18_B"/>
    <property type="match status" value="1"/>
</dbReference>
<dbReference type="InterPro" id="IPR004389">
    <property type="entry name" value="Ribosomal_uL18_bac-type"/>
</dbReference>
<dbReference type="InterPro" id="IPR005484">
    <property type="entry name" value="Ribosomal_uL18_bac/euk"/>
</dbReference>
<dbReference type="NCBIfam" id="TIGR00060">
    <property type="entry name" value="L18_bact"/>
    <property type="match status" value="1"/>
</dbReference>
<dbReference type="PANTHER" id="PTHR12899">
    <property type="entry name" value="39S RIBOSOMAL PROTEIN L18, MITOCHONDRIAL"/>
    <property type="match status" value="1"/>
</dbReference>
<dbReference type="PANTHER" id="PTHR12899:SF3">
    <property type="entry name" value="LARGE RIBOSOMAL SUBUNIT PROTEIN UL18M"/>
    <property type="match status" value="1"/>
</dbReference>
<dbReference type="Pfam" id="PF00861">
    <property type="entry name" value="Ribosomal_L18p"/>
    <property type="match status" value="1"/>
</dbReference>
<dbReference type="SUPFAM" id="SSF53137">
    <property type="entry name" value="Translational machinery components"/>
    <property type="match status" value="1"/>
</dbReference>
<accession>A8EZK0</accession>
<reference key="1">
    <citation type="submission" date="2007-09" db="EMBL/GenBank/DDBJ databases">
        <title>Complete genome sequence of Rickettsia canadensis.</title>
        <authorList>
            <person name="Madan A."/>
            <person name="Fahey J."/>
            <person name="Helton E."/>
            <person name="Ketteman M."/>
            <person name="Madan A."/>
            <person name="Rodrigues S."/>
            <person name="Sanchez A."/>
            <person name="Whiting M."/>
            <person name="Dasch G."/>
            <person name="Eremeeva M."/>
        </authorList>
    </citation>
    <scope>NUCLEOTIDE SEQUENCE [LARGE SCALE GENOMIC DNA]</scope>
    <source>
        <strain>McKiel</strain>
    </source>
</reference>
<evidence type="ECO:0000255" key="1">
    <source>
        <dbReference type="HAMAP-Rule" id="MF_01337"/>
    </source>
</evidence>
<evidence type="ECO:0000305" key="2"/>
<gene>
    <name evidence="1" type="primary">rplR</name>
    <name type="ordered locus">A1E_04290</name>
</gene>
<protein>
    <recommendedName>
        <fullName evidence="1">Large ribosomal subunit protein uL18</fullName>
    </recommendedName>
    <alternativeName>
        <fullName evidence="2">50S ribosomal protein L18</fullName>
    </alternativeName>
</protein>
<name>RL18_RICCK</name>
<comment type="function">
    <text evidence="1">This is one of the proteins that bind and probably mediate the attachment of the 5S RNA into the large ribosomal subunit, where it forms part of the central protuberance.</text>
</comment>
<comment type="subunit">
    <text evidence="1">Part of the 50S ribosomal subunit; part of the 5S rRNA/L5/L18/L25 subcomplex. Contacts the 5S and 23S rRNAs.</text>
</comment>
<comment type="similarity">
    <text evidence="1">Belongs to the universal ribosomal protein uL18 family.</text>
</comment>
<keyword id="KW-0687">Ribonucleoprotein</keyword>
<keyword id="KW-0689">Ribosomal protein</keyword>
<keyword id="KW-0694">RNA-binding</keyword>
<keyword id="KW-0699">rRNA-binding</keyword>